<name>PHCB1_SYNP6</name>
<gene>
    <name type="primary">cpcB1</name>
    <name type="synonym">cpcB</name>
    <name type="ordered locus">syc0496_c</name>
</gene>
<proteinExistence type="evidence at protein level"/>
<feature type="initiator methionine" description="Removed" evidence="4">
    <location>
        <position position="1"/>
    </location>
</feature>
<feature type="chain" id="PRO_0000199158" description="C-phycocyanin-1 beta subunit">
    <location>
        <begin position="2"/>
        <end position="173"/>
    </location>
</feature>
<feature type="binding site" description="covalent" evidence="3 4">
    <location>
        <position position="83"/>
    </location>
    <ligand>
        <name>(2R,3E)-phycocyanobilin</name>
        <dbReference type="ChEBI" id="CHEBI:85275"/>
        <label>1</label>
    </ligand>
</feature>
<feature type="binding site" description="covalent" evidence="3 4">
    <location>
        <position position="154"/>
    </location>
    <ligand>
        <name>(2R,3E)-phycocyanobilin</name>
        <dbReference type="ChEBI" id="CHEBI:85275"/>
        <label>2</label>
    </ligand>
</feature>
<feature type="modified residue" description="N4-methylasparagine" evidence="2">
    <location>
        <position position="73"/>
    </location>
</feature>
<feature type="sequence conflict" description="In Ref. 3; AA sequence." evidence="5" ref="3">
    <original>LS</original>
    <variation>SL</variation>
    <location>
        <begin position="28"/>
        <end position="29"/>
    </location>
</feature>
<feature type="sequence conflict" description="In Ref. 3; AA sequence." evidence="5" ref="3">
    <location>
        <position position="79"/>
    </location>
</feature>
<feature type="sequence conflict" description="In Ref. 3; AA sequence." evidence="5" ref="3">
    <original>N</original>
    <variation>D</variation>
    <location>
        <position position="112"/>
    </location>
</feature>
<feature type="sequence conflict" description="In Ref. 3; AA sequence." evidence="5" ref="3">
    <original>L</original>
    <variation>S</variation>
    <location>
        <position position="121"/>
    </location>
</feature>
<feature type="sequence conflict" description="In Ref. 3; AA sequence." evidence="5" ref="3">
    <original>S</original>
    <variation>L</variation>
    <location>
        <position position="127"/>
    </location>
</feature>
<feature type="sequence conflict" description="In Ref. 3; AA sequence and 5; AA sequence." evidence="5" ref="3 5">
    <location>
        <position position="158"/>
    </location>
</feature>
<dbReference type="EMBL" id="M94218">
    <property type="protein sequence ID" value="AAA64526.1"/>
    <property type="molecule type" value="Genomic_DNA"/>
</dbReference>
<dbReference type="EMBL" id="AP008231">
    <property type="protein sequence ID" value="BAD78686.1"/>
    <property type="molecule type" value="Genomic_DNA"/>
</dbReference>
<dbReference type="RefSeq" id="WP_011242808.1">
    <property type="nucleotide sequence ID" value="NZ_CP085785.1"/>
</dbReference>
<dbReference type="SMR" id="P00312"/>
<dbReference type="iPTMnet" id="P00312"/>
<dbReference type="KEGG" id="syc:syc0496_c"/>
<dbReference type="eggNOG" id="ENOG502Z7NE">
    <property type="taxonomic scope" value="Bacteria"/>
</dbReference>
<dbReference type="Proteomes" id="UP000001175">
    <property type="component" value="Chromosome"/>
</dbReference>
<dbReference type="GO" id="GO:0030089">
    <property type="term" value="C:phycobilisome"/>
    <property type="evidence" value="ECO:0007669"/>
    <property type="project" value="UniProtKB-KW"/>
</dbReference>
<dbReference type="GO" id="GO:0031676">
    <property type="term" value="C:plasma membrane-derived thylakoid membrane"/>
    <property type="evidence" value="ECO:0007669"/>
    <property type="project" value="UniProtKB-SubCell"/>
</dbReference>
<dbReference type="GO" id="GO:0015979">
    <property type="term" value="P:photosynthesis"/>
    <property type="evidence" value="ECO:0007669"/>
    <property type="project" value="UniProtKB-KW"/>
</dbReference>
<dbReference type="CDD" id="cd14768">
    <property type="entry name" value="PC_PEC_beta"/>
    <property type="match status" value="1"/>
</dbReference>
<dbReference type="Gene3D" id="1.10.490.20">
    <property type="entry name" value="Phycocyanins"/>
    <property type="match status" value="1"/>
</dbReference>
<dbReference type="InterPro" id="IPR009050">
    <property type="entry name" value="Globin-like_sf"/>
</dbReference>
<dbReference type="InterPro" id="IPR012128">
    <property type="entry name" value="Phycobilisome_asu/bsu"/>
</dbReference>
<dbReference type="InterPro" id="IPR038719">
    <property type="entry name" value="Phycobilisome_asu/bsu_sf"/>
</dbReference>
<dbReference type="InterPro" id="IPR006247">
    <property type="entry name" value="Phycocyanin_b"/>
</dbReference>
<dbReference type="NCBIfam" id="TIGR01339">
    <property type="entry name" value="phycocy_beta"/>
    <property type="match status" value="1"/>
</dbReference>
<dbReference type="PANTHER" id="PTHR34011:SF7">
    <property type="entry name" value="C-PHYCOCYANIN BETA SUBUNIT"/>
    <property type="match status" value="1"/>
</dbReference>
<dbReference type="PANTHER" id="PTHR34011">
    <property type="entry name" value="PHYCOBILISOME 32.1 KDA LINKER POLYPEPTIDE, PHYCOCYANIN-ASSOCIATED, ROD 2-RELATED"/>
    <property type="match status" value="1"/>
</dbReference>
<dbReference type="Pfam" id="PF00502">
    <property type="entry name" value="Phycobilisome"/>
    <property type="match status" value="1"/>
</dbReference>
<dbReference type="PIRSF" id="PIRSF000081">
    <property type="entry name" value="Phycocyanin"/>
    <property type="match status" value="1"/>
</dbReference>
<dbReference type="SUPFAM" id="SSF46458">
    <property type="entry name" value="Globin-like"/>
    <property type="match status" value="1"/>
</dbReference>
<evidence type="ECO:0000250" key="1">
    <source>
        <dbReference type="UniProtKB" id="P06539"/>
    </source>
</evidence>
<evidence type="ECO:0000269" key="2">
    <source>
    </source>
</evidence>
<evidence type="ECO:0000269" key="3">
    <source>
    </source>
</evidence>
<evidence type="ECO:0000269" key="4">
    <source>
    </source>
</evidence>
<evidence type="ECO:0000305" key="5"/>
<accession>P00312</accession>
<accession>P11391</accession>
<accession>Q79DN9</accession>
<reference key="1">
    <citation type="journal article" date="1994" name="Plant Mol. Biol.">
        <title>Cloning of the cpcE and cpcF genes from Synechococcus sp. PCC 6301 and their inactivation in Synechococcus sp. PCC 7942.</title>
        <authorList>
            <person name="Bhalerao R.P."/>
            <person name="Lind L.K."/>
            <person name="Gustafsson P."/>
        </authorList>
    </citation>
    <scope>NUCLEOTIDE SEQUENCE [GENOMIC DNA]</scope>
</reference>
<reference key="2">
    <citation type="journal article" date="2007" name="Photosyn. Res.">
        <title>Complete nucleotide sequence of the freshwater unicellular cyanobacterium Synechococcus elongatus PCC 6301 chromosome: gene content and organization.</title>
        <authorList>
            <person name="Sugita C."/>
            <person name="Ogata K."/>
            <person name="Shikata M."/>
            <person name="Jikuya H."/>
            <person name="Takano J."/>
            <person name="Furumichi M."/>
            <person name="Kanehisa M."/>
            <person name="Omata T."/>
            <person name="Sugiura M."/>
            <person name="Sugita M."/>
        </authorList>
    </citation>
    <scope>NUCLEOTIDE SEQUENCE [LARGE SCALE GENOMIC DNA]</scope>
    <source>
        <strain>ATCC 27144 / PCC 6301 / SAUG 1402/1</strain>
    </source>
</reference>
<reference key="3">
    <citation type="journal article" date="1978" name="J. Biol. Chem.">
        <title>Structural studies on phycobiliproteins II. C-phycocyanin: amino acid sequence of the beta subunit. Specific cleavage of the alpha subunit.</title>
        <authorList>
            <person name="Freidenreich P."/>
            <person name="Apell G.S."/>
            <person name="Glazer A.N."/>
        </authorList>
    </citation>
    <scope>PROTEIN SEQUENCE OF 2-173</scope>
    <scope>CHROMOPHORE ATTACHMENT</scope>
    <source>
        <strain>ATCC 27144 / PCC 6301 / SAUG 1402/1</strain>
    </source>
</reference>
<reference key="4">
    <citation type="journal article" date="1985" name="FEBS Lett.">
        <title>Cloning of the beta-phycocyanin gene from Anacystis nidulans.</title>
        <authorList>
            <person name="Lind L.K."/>
            <person name="Kalla S.R."/>
            <person name="Loenneborg A."/>
            <person name="Oequist G."/>
            <person name="Gustafsson P."/>
        </authorList>
    </citation>
    <scope>NUCLEOTIDE SEQUENCE [GENOMIC DNA] OF 52-78</scope>
</reference>
<reference key="5">
    <citation type="journal article" date="1978" name="J. Biol. Chem.">
        <title>Structural studies on phycobiliproteins. I. Bilin-containing peptides of C-phycocyanin.</title>
        <authorList>
            <person name="Williams V.P."/>
            <person name="Glazer A.N."/>
        </authorList>
    </citation>
    <scope>PROTEIN SEQUENCE OF 81-87 AND 136-173</scope>
    <scope>SUBUNIT</scope>
    <scope>CHROMOPHORE ATTACHMENT</scope>
    <source>
        <strain>ATCC 27144 / PCC 6301 / SAUG 1402/1</strain>
    </source>
</reference>
<reference key="6">
    <citation type="journal article" date="1987" name="J. Biol. Chem.">
        <title>Gamma-N-methylasparagine in phycobiliproteins. Occurrence, location, and biosynthesis.</title>
        <authorList>
            <person name="Klotz A.V."/>
            <person name="Glazer A.N."/>
        </authorList>
    </citation>
    <scope>METHYLATION AT ASN-73</scope>
</reference>
<comment type="function">
    <text>Light-harvesting photosynthetic bile pigment-protein from the phycobiliprotein complex (phycobilisome, PBS). Phycocyanin is the major phycobiliprotein in the PBS rod.</text>
</comment>
<comment type="subunit">
    <text evidence="1 3">Heterodimer of an alpha and a beta subunit (PubMed:412846). The heterodimer further assembles into trimers and the trimers into hexamers (By similarity).</text>
</comment>
<comment type="subcellular location">
    <subcellularLocation>
        <location>Cellular thylakoid membrane</location>
        <topology>Peripheral membrane protein</topology>
        <orientation>Cytoplasmic side</orientation>
    </subcellularLocation>
    <text>Part of the phycobilisome rod.</text>
</comment>
<comment type="PTM">
    <text evidence="3 4">Contains two covalently linked bilin chromophores.</text>
</comment>
<comment type="similarity">
    <text evidence="5">Belongs to the phycobiliprotein family.</text>
</comment>
<keyword id="KW-0042">Antenna complex</keyword>
<keyword id="KW-0089">Bile pigment</keyword>
<keyword id="KW-0157">Chromophore</keyword>
<keyword id="KW-0903">Direct protein sequencing</keyword>
<keyword id="KW-0249">Electron transport</keyword>
<keyword id="KW-0472">Membrane</keyword>
<keyword id="KW-0488">Methylation</keyword>
<keyword id="KW-0602">Photosynthesis</keyword>
<keyword id="KW-0605">Phycobilisome</keyword>
<keyword id="KW-0793">Thylakoid</keyword>
<keyword id="KW-0813">Transport</keyword>
<organism>
    <name type="scientific">Synechococcus sp. (strain ATCC 27144 / PCC 6301 / SAUG 1402/1)</name>
    <name type="common">Anacystis nidulans</name>
    <dbReference type="NCBI Taxonomy" id="269084"/>
    <lineage>
        <taxon>Bacteria</taxon>
        <taxon>Bacillati</taxon>
        <taxon>Cyanobacteriota</taxon>
        <taxon>Cyanophyceae</taxon>
        <taxon>Synechococcales</taxon>
        <taxon>Synechococcaceae</taxon>
        <taxon>Synechococcus</taxon>
    </lineage>
</organism>
<sequence>MTFDAFTKVVAQADARGEFLSDAQLDALSRLVAEGNKRIDTVNRITGNASSIVANAARALFAEQPSLIAPGGNAYTNRRMAACLRDMEIILRYVTYAVFTGDASILDDRCLNGLRETYLALGVPGASVAEGVRKMKDAAVAIVSDRNGITQGDCSAIISELGSYFDKAAAAVA</sequence>
<protein>
    <recommendedName>
        <fullName>C-phycocyanin-1 beta subunit</fullName>
    </recommendedName>
</protein>